<dbReference type="EC" id="2.7.1.30" evidence="1"/>
<dbReference type="EMBL" id="CP001252">
    <property type="protein sequence ID" value="ACK44950.1"/>
    <property type="molecule type" value="Genomic_DNA"/>
</dbReference>
<dbReference type="RefSeq" id="WP_012586603.1">
    <property type="nucleotide sequence ID" value="NC_011663.1"/>
</dbReference>
<dbReference type="SMR" id="B8E4K9"/>
<dbReference type="KEGG" id="sbp:Sbal223_0416"/>
<dbReference type="HOGENOM" id="CLU_009281_2_3_6"/>
<dbReference type="UniPathway" id="UPA00618">
    <property type="reaction ID" value="UER00672"/>
</dbReference>
<dbReference type="Proteomes" id="UP000002507">
    <property type="component" value="Chromosome"/>
</dbReference>
<dbReference type="GO" id="GO:0005829">
    <property type="term" value="C:cytosol"/>
    <property type="evidence" value="ECO:0007669"/>
    <property type="project" value="TreeGrafter"/>
</dbReference>
<dbReference type="GO" id="GO:0005524">
    <property type="term" value="F:ATP binding"/>
    <property type="evidence" value="ECO:0007669"/>
    <property type="project" value="UniProtKB-UniRule"/>
</dbReference>
<dbReference type="GO" id="GO:0004370">
    <property type="term" value="F:glycerol kinase activity"/>
    <property type="evidence" value="ECO:0000250"/>
    <property type="project" value="UniProtKB"/>
</dbReference>
<dbReference type="GO" id="GO:0019563">
    <property type="term" value="P:glycerol catabolic process"/>
    <property type="evidence" value="ECO:0007669"/>
    <property type="project" value="UniProtKB-UniRule"/>
</dbReference>
<dbReference type="GO" id="GO:0006071">
    <property type="term" value="P:glycerol metabolic process"/>
    <property type="evidence" value="ECO:0000250"/>
    <property type="project" value="UniProtKB"/>
</dbReference>
<dbReference type="GO" id="GO:0006072">
    <property type="term" value="P:glycerol-3-phosphate metabolic process"/>
    <property type="evidence" value="ECO:0007669"/>
    <property type="project" value="InterPro"/>
</dbReference>
<dbReference type="CDD" id="cd07786">
    <property type="entry name" value="FGGY_EcGK_like"/>
    <property type="match status" value="1"/>
</dbReference>
<dbReference type="FunFam" id="3.30.420.40:FF:000007">
    <property type="entry name" value="Glycerol kinase"/>
    <property type="match status" value="1"/>
</dbReference>
<dbReference type="FunFam" id="3.30.420.40:FF:000008">
    <property type="entry name" value="Glycerol kinase"/>
    <property type="match status" value="1"/>
</dbReference>
<dbReference type="Gene3D" id="3.30.420.40">
    <property type="match status" value="2"/>
</dbReference>
<dbReference type="HAMAP" id="MF_00186">
    <property type="entry name" value="Glycerol_kin"/>
    <property type="match status" value="1"/>
</dbReference>
<dbReference type="InterPro" id="IPR043129">
    <property type="entry name" value="ATPase_NBD"/>
</dbReference>
<dbReference type="InterPro" id="IPR000577">
    <property type="entry name" value="Carb_kinase_FGGY"/>
</dbReference>
<dbReference type="InterPro" id="IPR018483">
    <property type="entry name" value="Carb_kinase_FGGY_CS"/>
</dbReference>
<dbReference type="InterPro" id="IPR018485">
    <property type="entry name" value="FGGY_C"/>
</dbReference>
<dbReference type="InterPro" id="IPR018484">
    <property type="entry name" value="FGGY_N"/>
</dbReference>
<dbReference type="InterPro" id="IPR005999">
    <property type="entry name" value="Glycerol_kin"/>
</dbReference>
<dbReference type="NCBIfam" id="TIGR01311">
    <property type="entry name" value="glycerol_kin"/>
    <property type="match status" value="1"/>
</dbReference>
<dbReference type="NCBIfam" id="NF000756">
    <property type="entry name" value="PRK00047.1"/>
    <property type="match status" value="1"/>
</dbReference>
<dbReference type="PANTHER" id="PTHR10196:SF69">
    <property type="entry name" value="GLYCEROL KINASE"/>
    <property type="match status" value="1"/>
</dbReference>
<dbReference type="PANTHER" id="PTHR10196">
    <property type="entry name" value="SUGAR KINASE"/>
    <property type="match status" value="1"/>
</dbReference>
<dbReference type="Pfam" id="PF02782">
    <property type="entry name" value="FGGY_C"/>
    <property type="match status" value="1"/>
</dbReference>
<dbReference type="Pfam" id="PF00370">
    <property type="entry name" value="FGGY_N"/>
    <property type="match status" value="1"/>
</dbReference>
<dbReference type="PIRSF" id="PIRSF000538">
    <property type="entry name" value="GlpK"/>
    <property type="match status" value="1"/>
</dbReference>
<dbReference type="SUPFAM" id="SSF53067">
    <property type="entry name" value="Actin-like ATPase domain"/>
    <property type="match status" value="2"/>
</dbReference>
<dbReference type="PROSITE" id="PS00933">
    <property type="entry name" value="FGGY_KINASES_1"/>
    <property type="match status" value="1"/>
</dbReference>
<dbReference type="PROSITE" id="PS00445">
    <property type="entry name" value="FGGY_KINASES_2"/>
    <property type="match status" value="1"/>
</dbReference>
<organism>
    <name type="scientific">Shewanella baltica (strain OS223)</name>
    <dbReference type="NCBI Taxonomy" id="407976"/>
    <lineage>
        <taxon>Bacteria</taxon>
        <taxon>Pseudomonadati</taxon>
        <taxon>Pseudomonadota</taxon>
        <taxon>Gammaproteobacteria</taxon>
        <taxon>Alteromonadales</taxon>
        <taxon>Shewanellaceae</taxon>
        <taxon>Shewanella</taxon>
    </lineage>
</organism>
<protein>
    <recommendedName>
        <fullName evidence="1">Glycerol kinase</fullName>
        <ecNumber evidence="1">2.7.1.30</ecNumber>
    </recommendedName>
    <alternativeName>
        <fullName evidence="1">ATP:glycerol 3-phosphotransferase</fullName>
    </alternativeName>
    <alternativeName>
        <fullName evidence="1">Glycerokinase</fullName>
        <shortName evidence="1">GK</shortName>
    </alternativeName>
</protein>
<proteinExistence type="inferred from homology"/>
<feature type="chain" id="PRO_1000124202" description="Glycerol kinase">
    <location>
        <begin position="1"/>
        <end position="494"/>
    </location>
</feature>
<feature type="binding site" evidence="1">
    <location>
        <position position="13"/>
    </location>
    <ligand>
        <name>ADP</name>
        <dbReference type="ChEBI" id="CHEBI:456216"/>
    </ligand>
</feature>
<feature type="binding site" evidence="1">
    <location>
        <position position="13"/>
    </location>
    <ligand>
        <name>ATP</name>
        <dbReference type="ChEBI" id="CHEBI:30616"/>
    </ligand>
</feature>
<feature type="binding site" evidence="1">
    <location>
        <position position="13"/>
    </location>
    <ligand>
        <name>sn-glycerol 3-phosphate</name>
        <dbReference type="ChEBI" id="CHEBI:57597"/>
    </ligand>
</feature>
<feature type="binding site" evidence="1">
    <location>
        <position position="14"/>
    </location>
    <ligand>
        <name>ATP</name>
        <dbReference type="ChEBI" id="CHEBI:30616"/>
    </ligand>
</feature>
<feature type="binding site" evidence="1">
    <location>
        <position position="15"/>
    </location>
    <ligand>
        <name>ATP</name>
        <dbReference type="ChEBI" id="CHEBI:30616"/>
    </ligand>
</feature>
<feature type="binding site" evidence="1">
    <location>
        <position position="17"/>
    </location>
    <ligand>
        <name>ADP</name>
        <dbReference type="ChEBI" id="CHEBI:456216"/>
    </ligand>
</feature>
<feature type="binding site" evidence="1">
    <location>
        <position position="83"/>
    </location>
    <ligand>
        <name>glycerol</name>
        <dbReference type="ChEBI" id="CHEBI:17754"/>
    </ligand>
</feature>
<feature type="binding site" evidence="1">
    <location>
        <position position="83"/>
    </location>
    <ligand>
        <name>sn-glycerol 3-phosphate</name>
        <dbReference type="ChEBI" id="CHEBI:57597"/>
    </ligand>
</feature>
<feature type="binding site" evidence="1">
    <location>
        <position position="84"/>
    </location>
    <ligand>
        <name>glycerol</name>
        <dbReference type="ChEBI" id="CHEBI:17754"/>
    </ligand>
</feature>
<feature type="binding site" evidence="1">
    <location>
        <position position="84"/>
    </location>
    <ligand>
        <name>sn-glycerol 3-phosphate</name>
        <dbReference type="ChEBI" id="CHEBI:57597"/>
    </ligand>
</feature>
<feature type="binding site" evidence="1">
    <location>
        <position position="135"/>
    </location>
    <ligand>
        <name>glycerol</name>
        <dbReference type="ChEBI" id="CHEBI:17754"/>
    </ligand>
</feature>
<feature type="binding site" evidence="1">
    <location>
        <position position="135"/>
    </location>
    <ligand>
        <name>sn-glycerol 3-phosphate</name>
        <dbReference type="ChEBI" id="CHEBI:57597"/>
    </ligand>
</feature>
<feature type="binding site" evidence="1">
    <location>
        <position position="244"/>
    </location>
    <ligand>
        <name>glycerol</name>
        <dbReference type="ChEBI" id="CHEBI:17754"/>
    </ligand>
</feature>
<feature type="binding site" evidence="1">
    <location>
        <position position="244"/>
    </location>
    <ligand>
        <name>sn-glycerol 3-phosphate</name>
        <dbReference type="ChEBI" id="CHEBI:57597"/>
    </ligand>
</feature>
<feature type="binding site" evidence="1">
    <location>
        <position position="245"/>
    </location>
    <ligand>
        <name>glycerol</name>
        <dbReference type="ChEBI" id="CHEBI:17754"/>
    </ligand>
</feature>
<feature type="binding site" evidence="1">
    <location>
        <position position="266"/>
    </location>
    <ligand>
        <name>ADP</name>
        <dbReference type="ChEBI" id="CHEBI:456216"/>
    </ligand>
</feature>
<feature type="binding site" evidence="1">
    <location>
        <position position="266"/>
    </location>
    <ligand>
        <name>ATP</name>
        <dbReference type="ChEBI" id="CHEBI:30616"/>
    </ligand>
</feature>
<feature type="binding site" evidence="1">
    <location>
        <position position="309"/>
    </location>
    <ligand>
        <name>ADP</name>
        <dbReference type="ChEBI" id="CHEBI:456216"/>
    </ligand>
</feature>
<feature type="binding site" evidence="1">
    <location>
        <position position="309"/>
    </location>
    <ligand>
        <name>ATP</name>
        <dbReference type="ChEBI" id="CHEBI:30616"/>
    </ligand>
</feature>
<feature type="binding site" evidence="1">
    <location>
        <position position="313"/>
    </location>
    <ligand>
        <name>ATP</name>
        <dbReference type="ChEBI" id="CHEBI:30616"/>
    </ligand>
</feature>
<feature type="binding site" evidence="1">
    <location>
        <position position="410"/>
    </location>
    <ligand>
        <name>ADP</name>
        <dbReference type="ChEBI" id="CHEBI:456216"/>
    </ligand>
</feature>
<feature type="binding site" evidence="1">
    <location>
        <position position="410"/>
    </location>
    <ligand>
        <name>ATP</name>
        <dbReference type="ChEBI" id="CHEBI:30616"/>
    </ligand>
</feature>
<feature type="binding site" evidence="1">
    <location>
        <position position="414"/>
    </location>
    <ligand>
        <name>ADP</name>
        <dbReference type="ChEBI" id="CHEBI:456216"/>
    </ligand>
</feature>
<reference key="1">
    <citation type="submission" date="2008-12" db="EMBL/GenBank/DDBJ databases">
        <title>Complete sequence of chromosome of Shewanella baltica OS223.</title>
        <authorList>
            <consortium name="US DOE Joint Genome Institute"/>
            <person name="Lucas S."/>
            <person name="Copeland A."/>
            <person name="Lapidus A."/>
            <person name="Glavina del Rio T."/>
            <person name="Dalin E."/>
            <person name="Tice H."/>
            <person name="Bruce D."/>
            <person name="Goodwin L."/>
            <person name="Pitluck S."/>
            <person name="Chertkov O."/>
            <person name="Meincke L."/>
            <person name="Brettin T."/>
            <person name="Detter J.C."/>
            <person name="Han C."/>
            <person name="Kuske C.R."/>
            <person name="Larimer F."/>
            <person name="Land M."/>
            <person name="Hauser L."/>
            <person name="Kyrpides N."/>
            <person name="Ovchinnikova G."/>
            <person name="Brettar I."/>
            <person name="Rodrigues J."/>
            <person name="Konstantinidis K."/>
            <person name="Tiedje J."/>
        </authorList>
    </citation>
    <scope>NUCLEOTIDE SEQUENCE [LARGE SCALE GENOMIC DNA]</scope>
    <source>
        <strain>OS223</strain>
    </source>
</reference>
<gene>
    <name evidence="1" type="primary">glpK</name>
    <name type="ordered locus">Sbal223_0416</name>
</gene>
<sequence length="494" mass="54014">MQKKYVVALDQGTTSSRAIVFDHDANIVSVSQREFTQLYPNPGWVEHDPMEIWASQSSVLVEVLARAGIHSDEVAAIGITNQRETTVIWEKATGKPIYNAIVWQCRRSSEICEQLKAQGLEEYVRENTGLLLDPYFSGTKIKWILDNVPNARAQAERGELLFGTIDTWLVWKLTEGKVHVTDPTNAARTMLFNIHSLTWDNKLLEALDIPLSLLPEVKPSCSVYGTTRIAGEGSEIQVAGMAGDQQAALFGQLCVEPGMAKNTYGTGCFLLMNTGTKAVRSNHGLLTTVAVGPKGEVNYALEGSVFMGGATIQWLRDELGLIRDASDTEYFASKVADTNGVYLVPAFVGLGAPYWDPNARGALFGLTRGANRNHIIRAALESIAYQSKDLLDAMTKDSGVSLKRLKVDGGAVANDFLMQFQADITDVEVLRPSVCETTALGAAFLAGLAVGFWESVIELEHKACIDKHFIPNIDAENRGRLYAGWQDAVARTRA</sequence>
<keyword id="KW-0067">ATP-binding</keyword>
<keyword id="KW-0319">Glycerol metabolism</keyword>
<keyword id="KW-0418">Kinase</keyword>
<keyword id="KW-0547">Nucleotide-binding</keyword>
<keyword id="KW-0808">Transferase</keyword>
<comment type="function">
    <text evidence="1">Key enzyme in the regulation of glycerol uptake and metabolism. Catalyzes the phosphorylation of glycerol to yield sn-glycerol 3-phosphate.</text>
</comment>
<comment type="catalytic activity">
    <reaction evidence="1">
        <text>glycerol + ATP = sn-glycerol 3-phosphate + ADP + H(+)</text>
        <dbReference type="Rhea" id="RHEA:21644"/>
        <dbReference type="ChEBI" id="CHEBI:15378"/>
        <dbReference type="ChEBI" id="CHEBI:17754"/>
        <dbReference type="ChEBI" id="CHEBI:30616"/>
        <dbReference type="ChEBI" id="CHEBI:57597"/>
        <dbReference type="ChEBI" id="CHEBI:456216"/>
        <dbReference type="EC" id="2.7.1.30"/>
    </reaction>
</comment>
<comment type="activity regulation">
    <text evidence="1">Inhibited by fructose 1,6-bisphosphate (FBP).</text>
</comment>
<comment type="pathway">
    <text evidence="1">Polyol metabolism; glycerol degradation via glycerol kinase pathway; sn-glycerol 3-phosphate from glycerol: step 1/1.</text>
</comment>
<comment type="similarity">
    <text evidence="1">Belongs to the FGGY kinase family.</text>
</comment>
<accession>B8E4K9</accession>
<name>GLPK_SHEB2</name>
<evidence type="ECO:0000255" key="1">
    <source>
        <dbReference type="HAMAP-Rule" id="MF_00186"/>
    </source>
</evidence>